<organism>
    <name type="scientific">Staphylococcus aureus (strain NCTC 8325 / PS 47)</name>
    <dbReference type="NCBI Taxonomy" id="93061"/>
    <lineage>
        <taxon>Bacteria</taxon>
        <taxon>Bacillati</taxon>
        <taxon>Bacillota</taxon>
        <taxon>Bacilli</taxon>
        <taxon>Bacillales</taxon>
        <taxon>Staphylococcaceae</taxon>
        <taxon>Staphylococcus</taxon>
    </lineage>
</organism>
<reference key="1">
    <citation type="book" date="2006" name="Gram positive pathogens, 2nd edition">
        <title>The Staphylococcus aureus NCTC 8325 genome.</title>
        <editorList>
            <person name="Fischetti V."/>
            <person name="Novick R."/>
            <person name="Ferretti J."/>
            <person name="Portnoy D."/>
            <person name="Rood J."/>
        </editorList>
        <authorList>
            <person name="Gillaspy A.F."/>
            <person name="Worrell V."/>
            <person name="Orvis J."/>
            <person name="Roe B.A."/>
            <person name="Dyer D.W."/>
            <person name="Iandolo J.J."/>
        </authorList>
    </citation>
    <scope>NUCLEOTIDE SEQUENCE [LARGE SCALE GENOMIC DNA]</scope>
    <source>
        <strain>NCTC 8325 / PS 47</strain>
    </source>
</reference>
<feature type="chain" id="PRO_0000275851" description="Teichoic acids export ATP-binding protein TagH">
    <location>
        <begin position="1"/>
        <end position="264"/>
    </location>
</feature>
<feature type="domain" description="ABC transporter" evidence="1">
    <location>
        <begin position="5"/>
        <end position="243"/>
    </location>
</feature>
<feature type="binding site" evidence="1">
    <location>
        <begin position="57"/>
        <end position="64"/>
    </location>
    <ligand>
        <name>ATP</name>
        <dbReference type="ChEBI" id="CHEBI:30616"/>
    </ligand>
</feature>
<accession>Q2G2L1</accession>
<gene>
    <name evidence="1" type="primary">tagH</name>
    <name type="ordered locus">SAOUHSC_00641</name>
</gene>
<keyword id="KW-0067">ATP-binding</keyword>
<keyword id="KW-1003">Cell membrane</keyword>
<keyword id="KW-0472">Membrane</keyword>
<keyword id="KW-0547">Nucleotide-binding</keyword>
<keyword id="KW-1185">Reference proteome</keyword>
<keyword id="KW-1278">Translocase</keyword>
<keyword id="KW-0813">Transport</keyword>
<name>TAGH_STAA8</name>
<evidence type="ECO:0000255" key="1">
    <source>
        <dbReference type="HAMAP-Rule" id="MF_01715"/>
    </source>
</evidence>
<sequence length="264" mass="29763">MNVSVNIKNVTKEYRIYRTNKERMKDALIPKHKNKTFFALDDISLKAYEGDVIGLVGINGSGKSTLSNIIGGSLSPTVGKVDRNGEVSVIAISAGLSGQLTGIENIEFKMLCMGFKRKEIKAMTPKIIEFSELGEFIYQPVKKYSSGMRAKLGFSINITVNPDILVIDEALSVGDQTFAQKCLDKIYEFKEQNKTIFFVSHNLGQVRQFCTKIAWIEGGKLKDYGELDDVLPKYEAFLNDFKKKSKAEQKEFRNKLDESRFVIK</sequence>
<proteinExistence type="inferred from homology"/>
<protein>
    <recommendedName>
        <fullName evidence="1">Teichoic acids export ATP-binding protein TagH</fullName>
        <ecNumber evidence="1">7.5.2.4</ecNumber>
    </recommendedName>
</protein>
<comment type="function">
    <text evidence="1">Part of the ABC transporter complex TagGH involved in teichoic acids export. Responsible for energy coupling to the transport system.</text>
</comment>
<comment type="catalytic activity">
    <reaction evidence="1">
        <text>ATP + H2O + teichoic acidSide 1 = ADP + phosphate + teichoic acidSide 2.</text>
        <dbReference type="EC" id="7.5.2.4"/>
    </reaction>
</comment>
<comment type="subunit">
    <text evidence="1">The complex is composed of two ATP-binding proteins (TagH) and two transmembrane proteins (TagG).</text>
</comment>
<comment type="subcellular location">
    <subcellularLocation>
        <location evidence="1">Cell membrane</location>
        <topology evidence="1">Peripheral membrane protein</topology>
    </subcellularLocation>
</comment>
<comment type="similarity">
    <text evidence="1">Belongs to the ABC transporter superfamily. Teichoic acids exporter (TC 3.A.1.104.1) family.</text>
</comment>
<dbReference type="EC" id="7.5.2.4" evidence="1"/>
<dbReference type="EMBL" id="CP000253">
    <property type="protein sequence ID" value="ABD29776.1"/>
    <property type="molecule type" value="Genomic_DNA"/>
</dbReference>
<dbReference type="RefSeq" id="WP_001103232.1">
    <property type="nucleotide sequence ID" value="NZ_LS483365.1"/>
</dbReference>
<dbReference type="RefSeq" id="YP_499201.1">
    <property type="nucleotide sequence ID" value="NC_007795.1"/>
</dbReference>
<dbReference type="SMR" id="Q2G2L1"/>
<dbReference type="STRING" id="93061.SAOUHSC_00641"/>
<dbReference type="PaxDb" id="1280-SAXN108_0703"/>
<dbReference type="GeneID" id="3920049"/>
<dbReference type="GeneID" id="98344978"/>
<dbReference type="KEGG" id="sao:SAOUHSC_00641"/>
<dbReference type="PATRIC" id="fig|93061.5.peg.575"/>
<dbReference type="eggNOG" id="COG1134">
    <property type="taxonomic scope" value="Bacteria"/>
</dbReference>
<dbReference type="HOGENOM" id="CLU_000604_1_2_9"/>
<dbReference type="OrthoDB" id="9778870at2"/>
<dbReference type="PRO" id="PR:Q2G2L1"/>
<dbReference type="Proteomes" id="UP000008816">
    <property type="component" value="Chromosome"/>
</dbReference>
<dbReference type="GO" id="GO:0005886">
    <property type="term" value="C:plasma membrane"/>
    <property type="evidence" value="ECO:0007669"/>
    <property type="project" value="UniProtKB-SubCell"/>
</dbReference>
<dbReference type="GO" id="GO:0015438">
    <property type="term" value="F:ABC-type teichoic acid transporter activity"/>
    <property type="evidence" value="ECO:0007669"/>
    <property type="project" value="UniProtKB-EC"/>
</dbReference>
<dbReference type="GO" id="GO:0005524">
    <property type="term" value="F:ATP binding"/>
    <property type="evidence" value="ECO:0007669"/>
    <property type="project" value="UniProtKB-KW"/>
</dbReference>
<dbReference type="GO" id="GO:0016887">
    <property type="term" value="F:ATP hydrolysis activity"/>
    <property type="evidence" value="ECO:0007669"/>
    <property type="project" value="InterPro"/>
</dbReference>
<dbReference type="CDD" id="cd03220">
    <property type="entry name" value="ABC_KpsT_Wzt"/>
    <property type="match status" value="1"/>
</dbReference>
<dbReference type="FunFam" id="3.40.50.300:FF:003010">
    <property type="entry name" value="Teichoic acids export ATP-binding protein TagH"/>
    <property type="match status" value="1"/>
</dbReference>
<dbReference type="Gene3D" id="3.40.50.300">
    <property type="entry name" value="P-loop containing nucleotide triphosphate hydrolases"/>
    <property type="match status" value="1"/>
</dbReference>
<dbReference type="InterPro" id="IPR003593">
    <property type="entry name" value="AAA+_ATPase"/>
</dbReference>
<dbReference type="InterPro" id="IPR003439">
    <property type="entry name" value="ABC_transporter-like_ATP-bd"/>
</dbReference>
<dbReference type="InterPro" id="IPR017871">
    <property type="entry name" value="ABC_transporter-like_CS"/>
</dbReference>
<dbReference type="InterPro" id="IPR015860">
    <property type="entry name" value="ABC_transpr_TagH-like"/>
</dbReference>
<dbReference type="InterPro" id="IPR050683">
    <property type="entry name" value="Bact_Polysacc_Export_ATP-bd"/>
</dbReference>
<dbReference type="InterPro" id="IPR027417">
    <property type="entry name" value="P-loop_NTPase"/>
</dbReference>
<dbReference type="NCBIfam" id="NF010066">
    <property type="entry name" value="PRK13546.1"/>
    <property type="match status" value="1"/>
</dbReference>
<dbReference type="PANTHER" id="PTHR46743">
    <property type="entry name" value="TEICHOIC ACIDS EXPORT ATP-BINDING PROTEIN TAGH"/>
    <property type="match status" value="1"/>
</dbReference>
<dbReference type="PANTHER" id="PTHR46743:SF2">
    <property type="entry name" value="TEICHOIC ACIDS EXPORT ATP-BINDING PROTEIN TAGH"/>
    <property type="match status" value="1"/>
</dbReference>
<dbReference type="Pfam" id="PF00005">
    <property type="entry name" value="ABC_tran"/>
    <property type="match status" value="1"/>
</dbReference>
<dbReference type="SMART" id="SM00382">
    <property type="entry name" value="AAA"/>
    <property type="match status" value="1"/>
</dbReference>
<dbReference type="SUPFAM" id="SSF52540">
    <property type="entry name" value="P-loop containing nucleoside triphosphate hydrolases"/>
    <property type="match status" value="1"/>
</dbReference>
<dbReference type="PROSITE" id="PS00211">
    <property type="entry name" value="ABC_TRANSPORTER_1"/>
    <property type="match status" value="1"/>
</dbReference>
<dbReference type="PROSITE" id="PS50893">
    <property type="entry name" value="ABC_TRANSPORTER_2"/>
    <property type="match status" value="1"/>
</dbReference>
<dbReference type="PROSITE" id="PS51251">
    <property type="entry name" value="TAGH"/>
    <property type="match status" value="1"/>
</dbReference>